<keyword id="KW-0002">3D-structure</keyword>
<keyword id="KW-1064">Adaptive immunity</keyword>
<keyword id="KW-0025">Alternative splicing</keyword>
<keyword id="KW-1003">Cell membrane</keyword>
<keyword id="KW-0903">Direct protein sequencing</keyword>
<keyword id="KW-1015">Disulfide bond</keyword>
<keyword id="KW-0325">Glycoprotein</keyword>
<keyword id="KW-0391">Immunity</keyword>
<keyword id="KW-1280">Immunoglobulin</keyword>
<keyword id="KW-0393">Immunoglobulin domain</keyword>
<keyword id="KW-0472">Membrane</keyword>
<keyword id="KW-1267">Proteomics identification</keyword>
<keyword id="KW-1185">Reference proteome</keyword>
<keyword id="KW-0964">Secreted</keyword>
<keyword id="KW-0812">Transmembrane</keyword>
<keyword id="KW-1133">Transmembrane helix</keyword>
<dbReference type="EMBL" id="K01316">
    <property type="protein sequence ID" value="AAB59394.1"/>
    <property type="status" value="ALT_INIT"/>
    <property type="molecule type" value="Genomic_DNA"/>
</dbReference>
<dbReference type="EMBL" id="AL928742">
    <property type="status" value="NOT_ANNOTATED_CDS"/>
    <property type="molecule type" value="Genomic_DNA"/>
</dbReference>
<dbReference type="PIR" id="A90933">
    <property type="entry name" value="G4HU"/>
</dbReference>
<dbReference type="PDB" id="1ADQ">
    <property type="method" value="X-ray"/>
    <property type="resolution" value="3.15 A"/>
    <property type="chains" value="A=118-323"/>
</dbReference>
<dbReference type="PDB" id="1BBJ">
    <property type="method" value="X-ray"/>
    <property type="resolution" value="3.10 A"/>
    <property type="chains" value="B/H=1-98"/>
</dbReference>
<dbReference type="PDB" id="2FL5">
    <property type="method" value="X-ray"/>
    <property type="resolution" value="3.00 A"/>
    <property type="chains" value="B/D/F/H=1-99"/>
</dbReference>
<dbReference type="PDB" id="3EO1">
    <property type="method" value="X-ray"/>
    <property type="resolution" value="3.10 A"/>
    <property type="chains" value="B/E/H/K=1-105"/>
</dbReference>
<dbReference type="PDB" id="4B53">
    <property type="method" value="X-ray"/>
    <property type="resolution" value="1.80 A"/>
    <property type="chains" value="A/B=223-327"/>
</dbReference>
<dbReference type="PDB" id="4C54">
    <property type="method" value="X-ray"/>
    <property type="resolution" value="1.90 A"/>
    <property type="chains" value="A/B=114-327"/>
</dbReference>
<dbReference type="PDB" id="4C55">
    <property type="method" value="X-ray"/>
    <property type="resolution" value="2.35 A"/>
    <property type="chains" value="A/B=110-327"/>
</dbReference>
<dbReference type="PDB" id="4D2N">
    <property type="method" value="X-ray"/>
    <property type="resolution" value="2.70 A"/>
    <property type="chains" value="A/B/C/D=102-327"/>
</dbReference>
<dbReference type="PDB" id="5HVW">
    <property type="method" value="X-ray"/>
    <property type="resolution" value="1.95 A"/>
    <property type="chains" value="A=115-324"/>
</dbReference>
<dbReference type="PDB" id="5LG1">
    <property type="method" value="X-ray"/>
    <property type="resolution" value="2.70 A"/>
    <property type="chains" value="A/B=114-327"/>
</dbReference>
<dbReference type="PDB" id="5W5M">
    <property type="method" value="X-ray"/>
    <property type="resolution" value="1.90 A"/>
    <property type="chains" value="A/B=106-327"/>
</dbReference>
<dbReference type="PDB" id="5W5N">
    <property type="method" value="X-ray"/>
    <property type="resolution" value="1.85 A"/>
    <property type="chains" value="A/B=106-327"/>
</dbReference>
<dbReference type="PDB" id="6WIB">
    <property type="method" value="X-ray"/>
    <property type="resolution" value="2.55 A"/>
    <property type="chains" value="A=115-325"/>
</dbReference>
<dbReference type="PDB" id="6WMH">
    <property type="method" value="X-ray"/>
    <property type="resolution" value="2.30 A"/>
    <property type="chains" value="A/H=118-324"/>
</dbReference>
<dbReference type="PDB" id="6WNA">
    <property type="method" value="X-ray"/>
    <property type="resolution" value="2.40 A"/>
    <property type="chains" value="H=118-324"/>
</dbReference>
<dbReference type="PDB" id="6WOL">
    <property type="method" value="X-ray"/>
    <property type="resolution" value="2.49 A"/>
    <property type="chains" value="H=117-326"/>
</dbReference>
<dbReference type="PDBsum" id="1ADQ"/>
<dbReference type="PDBsum" id="1BBJ"/>
<dbReference type="PDBsum" id="2FL5"/>
<dbReference type="PDBsum" id="3EO1"/>
<dbReference type="PDBsum" id="4B53"/>
<dbReference type="PDBsum" id="4C54"/>
<dbReference type="PDBsum" id="4C55"/>
<dbReference type="PDBsum" id="4D2N"/>
<dbReference type="PDBsum" id="5HVW"/>
<dbReference type="PDBsum" id="5LG1"/>
<dbReference type="PDBsum" id="5W5M"/>
<dbReference type="PDBsum" id="5W5N"/>
<dbReference type="PDBsum" id="6WIB"/>
<dbReference type="PDBsum" id="6WMH"/>
<dbReference type="PDBsum" id="6WNA"/>
<dbReference type="PDBsum" id="6WOL"/>
<dbReference type="EMDB" id="EMD-18999"/>
<dbReference type="EMDB" id="EMD-23156"/>
<dbReference type="EMDB" id="EMD-24073"/>
<dbReference type="EMDB" id="EMD-27228"/>
<dbReference type="EMDB" id="EMD-29220"/>
<dbReference type="EMDB" id="EMD-29221"/>
<dbReference type="EMDB" id="EMD-41710"/>
<dbReference type="EMDB" id="EMD-41891"/>
<dbReference type="EMDB" id="EMD-41892"/>
<dbReference type="EMDB" id="EMD-41893"/>
<dbReference type="EMDB" id="EMD-41894"/>
<dbReference type="EMDB" id="EMD-61741"/>
<dbReference type="SMR" id="P01861"/>
<dbReference type="ComplexPortal" id="CPX-6949">
    <property type="entry name" value="IgG4 - Ig kappa immunoglobulin complex, constant regions"/>
</dbReference>
<dbReference type="ComplexPortal" id="CPX-6950">
    <property type="entry name" value="IgG4 - Ig lambda 1 immunoglobulin complex, constant regions"/>
</dbReference>
<dbReference type="ComplexPortal" id="CPX-6951">
    <property type="entry name" value="IgG4 - Ig lambda 2 immunoglobulin complex, constant regions"/>
</dbReference>
<dbReference type="ComplexPortal" id="CPX-6952">
    <property type="entry name" value="IgG4 - Ig lambda 3 immunoglobulin complex, constant regions"/>
</dbReference>
<dbReference type="ComplexPortal" id="CPX-6953">
    <property type="entry name" value="IgG4 - Ig lambda 6 immunoglobulin complex, constant regions"/>
</dbReference>
<dbReference type="ComplexPortal" id="CPX-6954">
    <property type="entry name" value="IgG4 - Ig lambda 7 immunoglobulin complex, constant regions"/>
</dbReference>
<dbReference type="CORUM" id="P01861"/>
<dbReference type="FunCoup" id="P01861">
    <property type="interactions" value="126"/>
</dbReference>
<dbReference type="IntAct" id="P01861">
    <property type="interactions" value="40"/>
</dbReference>
<dbReference type="MINT" id="P01861"/>
<dbReference type="DrugBank" id="DB09130">
    <property type="generic name" value="Copper"/>
</dbReference>
<dbReference type="DrugBank" id="DB15258">
    <property type="generic name" value="Imlifidase"/>
</dbReference>
<dbReference type="DrugCentral" id="P01861"/>
<dbReference type="IMGT_GENE-DB" id="IGHG4"/>
<dbReference type="GlyConnect" id="233">
    <property type="glycosylation" value="111 N-Linked glycans"/>
</dbReference>
<dbReference type="GlyConnect" id="770">
    <property type="glycosylation" value="43 N-Linked glycans (1 site)"/>
</dbReference>
<dbReference type="GlyCosmos" id="P01861">
    <property type="glycosylation" value="1 site, 147 glycans"/>
</dbReference>
<dbReference type="GlyGen" id="P01861">
    <property type="glycosylation" value="7 sites, 149 N-linked glycans (2 sites), 1 O-linked glycan (5 sites)"/>
</dbReference>
<dbReference type="iPTMnet" id="P01861"/>
<dbReference type="PhosphoSitePlus" id="P01861"/>
<dbReference type="SwissPalm" id="P01861"/>
<dbReference type="BioMuta" id="IGHG4"/>
<dbReference type="DMDM" id="121047"/>
<dbReference type="CPTAC" id="CPTAC-673"/>
<dbReference type="jPOST" id="P01861"/>
<dbReference type="MassIVE" id="P01861"/>
<dbReference type="PRIDE" id="P01861"/>
<dbReference type="ProteomicsDB" id="51497"/>
<dbReference type="ABCD" id="P01861">
    <property type="antibodies" value="1 sequenced antibody"/>
</dbReference>
<dbReference type="Ensembl" id="ENST00000390543.3">
    <molecule id="P01861-1"/>
    <property type="protein sequence ID" value="ENSP00000374985.2"/>
    <property type="gene ID" value="ENSG00000211892.4"/>
</dbReference>
<dbReference type="Ensembl" id="ENST00000618981.2">
    <molecule id="P01861-1"/>
    <property type="protein sequence ID" value="ENSP00000483393.2"/>
    <property type="gene ID" value="ENSG00000277016.2"/>
</dbReference>
<dbReference type="Ensembl" id="ENST00000641978.1">
    <molecule id="P01861-2"/>
    <property type="protein sequence ID" value="ENSP00000493388.1"/>
    <property type="gene ID" value="ENSG00000211892.4"/>
</dbReference>
<dbReference type="UCSC" id="uc059gcs.1">
    <molecule id="P01861-2"/>
    <property type="organism name" value="human"/>
</dbReference>
<dbReference type="AGR" id="HGNC:5528"/>
<dbReference type="GeneCards" id="IGHG4"/>
<dbReference type="HGNC" id="HGNC:5528">
    <property type="gene designation" value="IGHG4"/>
</dbReference>
<dbReference type="HPA" id="ENSG00000211892">
    <property type="expression patterns" value="Tissue enriched (lymphoid)"/>
</dbReference>
<dbReference type="MIM" id="147130">
    <property type="type" value="gene"/>
</dbReference>
<dbReference type="neXtProt" id="NX_P01861"/>
<dbReference type="OpenTargets" id="ENSG00000211892"/>
<dbReference type="VEuPathDB" id="HostDB:ENSG00000211892"/>
<dbReference type="GeneTree" id="ENSGT00940000162793"/>
<dbReference type="HOGENOM" id="CLU_030625_0_2_1"/>
<dbReference type="InParanoid" id="P01861"/>
<dbReference type="OMA" id="WMENHES"/>
<dbReference type="OrthoDB" id="8694217at2759"/>
<dbReference type="PAN-GO" id="P01861">
    <property type="GO annotations" value="11 GO annotations based on evolutionary models"/>
</dbReference>
<dbReference type="PhylomeDB" id="P01861"/>
<dbReference type="TreeFam" id="TF334176"/>
<dbReference type="PathwayCommons" id="P01861"/>
<dbReference type="Reactome" id="R-HSA-166663">
    <property type="pathway name" value="Initial triggering of complement"/>
</dbReference>
<dbReference type="Reactome" id="R-HSA-173623">
    <property type="pathway name" value="Classical antibody-mediated complement activation"/>
</dbReference>
<dbReference type="Reactome" id="R-HSA-2029481">
    <property type="pathway name" value="FCGR activation"/>
</dbReference>
<dbReference type="Reactome" id="R-HSA-2029482">
    <property type="pathway name" value="Regulation of actin dynamics for phagocytic cup formation"/>
</dbReference>
<dbReference type="Reactome" id="R-HSA-2029485">
    <property type="pathway name" value="Role of phospholipids in phagocytosis"/>
</dbReference>
<dbReference type="Reactome" id="R-HSA-6785807">
    <property type="pathway name" value="Interleukin-4 and Interleukin-13 signaling"/>
</dbReference>
<dbReference type="Reactome" id="R-HSA-9664323">
    <property type="pathway name" value="FCGR3A-mediated IL10 synthesis"/>
</dbReference>
<dbReference type="Reactome" id="R-HSA-9664422">
    <property type="pathway name" value="FCGR3A-mediated phagocytosis"/>
</dbReference>
<dbReference type="Reactome" id="R-HSA-977606">
    <property type="pathway name" value="Regulation of Complement cascade"/>
</dbReference>
<dbReference type="SignaLink" id="P01861"/>
<dbReference type="ChiTaRS" id="IGHG4">
    <property type="organism name" value="human"/>
</dbReference>
<dbReference type="EvolutionaryTrace" id="P01861"/>
<dbReference type="Pharos" id="P01861">
    <property type="development level" value="Tclin"/>
</dbReference>
<dbReference type="PRO" id="PR:P01861"/>
<dbReference type="Proteomes" id="UP000005640">
    <property type="component" value="Chromosome 14"/>
</dbReference>
<dbReference type="RNAct" id="P01861">
    <property type="molecule type" value="protein"/>
</dbReference>
<dbReference type="Bgee" id="ENSG00000211892">
    <property type="expression patterns" value="Expressed in vermiform appendix and 91 other cell types or tissues"/>
</dbReference>
<dbReference type="ExpressionAtlas" id="P01861">
    <property type="expression patterns" value="baseline and differential"/>
</dbReference>
<dbReference type="GO" id="GO:0072562">
    <property type="term" value="C:blood microparticle"/>
    <property type="evidence" value="ECO:0007005"/>
    <property type="project" value="UniProtKB"/>
</dbReference>
<dbReference type="GO" id="GO:0070062">
    <property type="term" value="C:extracellular exosome"/>
    <property type="evidence" value="ECO:0007005"/>
    <property type="project" value="UniProtKB"/>
</dbReference>
<dbReference type="GO" id="GO:0005576">
    <property type="term" value="C:extracellular region"/>
    <property type="evidence" value="ECO:0000304"/>
    <property type="project" value="Reactome"/>
</dbReference>
<dbReference type="GO" id="GO:0005615">
    <property type="term" value="C:extracellular space"/>
    <property type="evidence" value="ECO:0007005"/>
    <property type="project" value="UniProtKB"/>
</dbReference>
<dbReference type="GO" id="GO:0071735">
    <property type="term" value="C:IgG immunoglobulin complex"/>
    <property type="evidence" value="ECO:0000303"/>
    <property type="project" value="ComplexPortal"/>
</dbReference>
<dbReference type="GO" id="GO:0042571">
    <property type="term" value="C:immunoglobulin complex, circulating"/>
    <property type="evidence" value="ECO:0000318"/>
    <property type="project" value="GO_Central"/>
</dbReference>
<dbReference type="GO" id="GO:0005886">
    <property type="term" value="C:plasma membrane"/>
    <property type="evidence" value="ECO:0000303"/>
    <property type="project" value="ComplexPortal"/>
</dbReference>
<dbReference type="GO" id="GO:0003823">
    <property type="term" value="F:antigen binding"/>
    <property type="evidence" value="ECO:0000318"/>
    <property type="project" value="GO_Central"/>
</dbReference>
<dbReference type="GO" id="GO:0034987">
    <property type="term" value="F:immunoglobulin receptor binding"/>
    <property type="evidence" value="ECO:0000318"/>
    <property type="project" value="GO_Central"/>
</dbReference>
<dbReference type="GO" id="GO:0002250">
    <property type="term" value="P:adaptive immune response"/>
    <property type="evidence" value="ECO:0000303"/>
    <property type="project" value="ComplexPortal"/>
</dbReference>
<dbReference type="GO" id="GO:0019731">
    <property type="term" value="P:antibacterial humoral response"/>
    <property type="evidence" value="ECO:0000318"/>
    <property type="project" value="GO_Central"/>
</dbReference>
<dbReference type="GO" id="GO:0050853">
    <property type="term" value="P:B cell receptor signaling pathway"/>
    <property type="evidence" value="ECO:0000303"/>
    <property type="project" value="ComplexPortal"/>
</dbReference>
<dbReference type="GO" id="GO:0006958">
    <property type="term" value="P:complement activation, classical pathway"/>
    <property type="evidence" value="ECO:0000318"/>
    <property type="project" value="GO_Central"/>
</dbReference>
<dbReference type="CDD" id="cd21817">
    <property type="entry name" value="IgC1_CH1_IgEG"/>
    <property type="match status" value="1"/>
</dbReference>
<dbReference type="CDD" id="cd05768">
    <property type="entry name" value="IgC1_CH3_IgAGD_CH4_IgAEM"/>
    <property type="match status" value="1"/>
</dbReference>
<dbReference type="FunFam" id="2.60.40.10:FF:000463">
    <property type="entry name" value="Immunoglobulin heavy constant gamma 1"/>
    <property type="match status" value="1"/>
</dbReference>
<dbReference type="FunFam" id="2.60.40.10:FF:001129">
    <property type="entry name" value="Immunoglobulin heavy constant gamma 1"/>
    <property type="match status" value="1"/>
</dbReference>
<dbReference type="FunFam" id="2.60.40.10:FF:001540">
    <property type="entry name" value="Immunoglobulin heavy constant gamma 1"/>
    <property type="match status" value="1"/>
</dbReference>
<dbReference type="Gene3D" id="2.60.40.10">
    <property type="entry name" value="Immunoglobulins"/>
    <property type="match status" value="3"/>
</dbReference>
<dbReference type="InterPro" id="IPR007110">
    <property type="entry name" value="Ig-like_dom"/>
</dbReference>
<dbReference type="InterPro" id="IPR036179">
    <property type="entry name" value="Ig-like_dom_sf"/>
</dbReference>
<dbReference type="InterPro" id="IPR013783">
    <property type="entry name" value="Ig-like_fold"/>
</dbReference>
<dbReference type="InterPro" id="IPR003006">
    <property type="entry name" value="Ig/MHC_CS"/>
</dbReference>
<dbReference type="InterPro" id="IPR003597">
    <property type="entry name" value="Ig_C1-set"/>
</dbReference>
<dbReference type="InterPro" id="IPR050380">
    <property type="entry name" value="Immune_Resp_Modulators"/>
</dbReference>
<dbReference type="PANTHER" id="PTHR23411">
    <property type="entry name" value="TAPASIN"/>
    <property type="match status" value="1"/>
</dbReference>
<dbReference type="Pfam" id="PF07654">
    <property type="entry name" value="C1-set"/>
    <property type="match status" value="3"/>
</dbReference>
<dbReference type="SMART" id="SM00407">
    <property type="entry name" value="IGc1"/>
    <property type="match status" value="3"/>
</dbReference>
<dbReference type="SUPFAM" id="SSF48726">
    <property type="entry name" value="Immunoglobulin"/>
    <property type="match status" value="3"/>
</dbReference>
<dbReference type="PROSITE" id="PS50835">
    <property type="entry name" value="IG_LIKE"/>
    <property type="match status" value="3"/>
</dbReference>
<dbReference type="PROSITE" id="PS00290">
    <property type="entry name" value="IG_MHC"/>
    <property type="match status" value="2"/>
</dbReference>
<organism>
    <name type="scientific">Homo sapiens</name>
    <name type="common">Human</name>
    <dbReference type="NCBI Taxonomy" id="9606"/>
    <lineage>
        <taxon>Eukaryota</taxon>
        <taxon>Metazoa</taxon>
        <taxon>Chordata</taxon>
        <taxon>Craniata</taxon>
        <taxon>Vertebrata</taxon>
        <taxon>Euteleostomi</taxon>
        <taxon>Mammalia</taxon>
        <taxon>Eutheria</taxon>
        <taxon>Euarchontoglires</taxon>
        <taxon>Primates</taxon>
        <taxon>Haplorrhini</taxon>
        <taxon>Catarrhini</taxon>
        <taxon>Hominidae</taxon>
        <taxon>Homo</taxon>
    </lineage>
</organism>
<sequence>ASTKGPSVFPLAPCSRSTSESTAALGCLVKDYFPEPVTVSWNSGALTSGVHTFPAVLQSSGLYSLSSVVTVPSSSLGTKTYTCNVDHKPSNTKVDKRVESKYGPPCPSCPAPEFLGGPSVFLFPPKPKDTLMISRTPEVTCVVVDVSQEDPEVQFNWYVDGVEVHNAKTKPREEQFNSTYRVVSVLTVLHQDWLNGKEYKCKVSNKGLPSSIEKTISKAKGQPREPQVYTLPPSQEEMTKNQVSLTCLVKGFYPSDIAVEWESNGQPENNYKTTPPVLDSDGSFFLYSRLTVDKSRWQEGNVFSCSVMHEALHNHYTQKSLSLSLELQLEESCAEAQDGELDGLWTTITIFITLFLLSVCYSATVTFFKVKWIFSSVVDLKQTIVPDYRNMIRQGA</sequence>
<evidence type="ECO:0000255" key="1"/>
<evidence type="ECO:0000255" key="2">
    <source>
        <dbReference type="PROSITE-ProRule" id="PRU00114"/>
    </source>
</evidence>
<evidence type="ECO:0000269" key="3">
    <source>
    </source>
</evidence>
<evidence type="ECO:0000269" key="4">
    <source>
    </source>
</evidence>
<evidence type="ECO:0000269" key="5">
    <source>
    </source>
</evidence>
<evidence type="ECO:0000269" key="6">
    <source>
    </source>
</evidence>
<evidence type="ECO:0000269" key="7">
    <source>
    </source>
</evidence>
<evidence type="ECO:0000303" key="8">
    <source>
    </source>
</evidence>
<evidence type="ECO:0000303" key="9">
    <source>
    </source>
</evidence>
<evidence type="ECO:0000303" key="10">
    <source>
    </source>
</evidence>
<evidence type="ECO:0000303" key="11">
    <source>
    </source>
</evidence>
<evidence type="ECO:0000303" key="12">
    <source ref="6"/>
</evidence>
<evidence type="ECO:0000305" key="13"/>
<evidence type="ECO:0007829" key="14">
    <source>
        <dbReference type="PDB" id="1BBJ"/>
    </source>
</evidence>
<evidence type="ECO:0007829" key="15">
    <source>
        <dbReference type="PDB" id="4B53"/>
    </source>
</evidence>
<evidence type="ECO:0007829" key="16">
    <source>
        <dbReference type="PDB" id="4C54"/>
    </source>
</evidence>
<evidence type="ECO:0007829" key="17">
    <source>
        <dbReference type="PDB" id="5HVW"/>
    </source>
</evidence>
<evidence type="ECO:0007829" key="18">
    <source>
        <dbReference type="PDB" id="5LG1"/>
    </source>
</evidence>
<evidence type="ECO:0007829" key="19">
    <source>
        <dbReference type="PDB" id="5W5N"/>
    </source>
</evidence>
<evidence type="ECO:0007829" key="20">
    <source>
        <dbReference type="PDB" id="6WOL"/>
    </source>
</evidence>
<protein>
    <recommendedName>
        <fullName evidence="8 12">Immunoglobulin heavy constant gamma 4</fullName>
    </recommendedName>
    <alternativeName>
        <fullName evidence="13">Ig gamma-4 chain C region</fullName>
    </alternativeName>
</protein>
<gene>
    <name evidence="8 12" type="primary">IGHG4</name>
</gene>
<name>IGHG4_HUMAN</name>
<accession>P01861</accession>
<accession>A0A286YFJ8</accession>
<reference key="1">
    <citation type="journal article" date="1981" name="DNA">
        <title>Nucleotide sequence of a human immunoglobulin C gamma 4 gene.</title>
        <authorList>
            <person name="Ellison J.W."/>
            <person name="Buxbaum J.N."/>
            <person name="Hood L.E."/>
        </authorList>
    </citation>
    <scope>NUCLEOTIDE SEQUENCE [GENOMIC DNA] (IMGT ALLELE IGHG4*01) (ISOFORM 1)</scope>
</reference>
<reference key="2">
    <citation type="journal article" date="2003" name="Nature">
        <title>The DNA sequence and analysis of human chromosome 14.</title>
        <authorList>
            <person name="Heilig R."/>
            <person name="Eckenberg R."/>
            <person name="Petit J.-L."/>
            <person name="Fonknechten N."/>
            <person name="Da Silva C."/>
            <person name="Cattolico L."/>
            <person name="Levy M."/>
            <person name="Barbe V."/>
            <person name="De Berardinis V."/>
            <person name="Ureta-Vidal A."/>
            <person name="Pelletier E."/>
            <person name="Vico V."/>
            <person name="Anthouard V."/>
            <person name="Rowen L."/>
            <person name="Madan A."/>
            <person name="Qin S."/>
            <person name="Sun H."/>
            <person name="Du H."/>
            <person name="Pepin K."/>
            <person name="Artiguenave F."/>
            <person name="Robert C."/>
            <person name="Cruaud C."/>
            <person name="Bruels T."/>
            <person name="Jaillon O."/>
            <person name="Friedlander L."/>
            <person name="Samson G."/>
            <person name="Brottier P."/>
            <person name="Cure S."/>
            <person name="Segurens B."/>
            <person name="Aniere F."/>
            <person name="Samain S."/>
            <person name="Crespeau H."/>
            <person name="Abbasi N."/>
            <person name="Aiach N."/>
            <person name="Boscus D."/>
            <person name="Dickhoff R."/>
            <person name="Dors M."/>
            <person name="Dubois I."/>
            <person name="Friedman C."/>
            <person name="Gouyvenoux M."/>
            <person name="James R."/>
            <person name="Madan A."/>
            <person name="Mairey-Estrada B."/>
            <person name="Mangenot S."/>
            <person name="Martins N."/>
            <person name="Menard M."/>
            <person name="Oztas S."/>
            <person name="Ratcliffe A."/>
            <person name="Shaffer T."/>
            <person name="Trask B."/>
            <person name="Vacherie B."/>
            <person name="Bellemere C."/>
            <person name="Belser C."/>
            <person name="Besnard-Gonnet M."/>
            <person name="Bartol-Mavel D."/>
            <person name="Boutard M."/>
            <person name="Briez-Silla S."/>
            <person name="Combette S."/>
            <person name="Dufosse-Laurent V."/>
            <person name="Ferron C."/>
            <person name="Lechaplais C."/>
            <person name="Louesse C."/>
            <person name="Muselet D."/>
            <person name="Magdelenat G."/>
            <person name="Pateau E."/>
            <person name="Petit E."/>
            <person name="Sirvain-Trukniewicz P."/>
            <person name="Trybou A."/>
            <person name="Vega-Czarny N."/>
            <person name="Bataille E."/>
            <person name="Bluet E."/>
            <person name="Bordelais I."/>
            <person name="Dubois M."/>
            <person name="Dumont C."/>
            <person name="Guerin T."/>
            <person name="Haffray S."/>
            <person name="Hammadi R."/>
            <person name="Muanga J."/>
            <person name="Pellouin V."/>
            <person name="Robert D."/>
            <person name="Wunderle E."/>
            <person name="Gauguet G."/>
            <person name="Roy A."/>
            <person name="Sainte-Marthe L."/>
            <person name="Verdier J."/>
            <person name="Verdier-Discala C."/>
            <person name="Hillier L.W."/>
            <person name="Fulton L."/>
            <person name="McPherson J."/>
            <person name="Matsuda F."/>
            <person name="Wilson R."/>
            <person name="Scarpelli C."/>
            <person name="Gyapay G."/>
            <person name="Wincker P."/>
            <person name="Saurin W."/>
            <person name="Quetier F."/>
            <person name="Waterston R."/>
            <person name="Hood L."/>
            <person name="Weissenbach J."/>
        </authorList>
    </citation>
    <scope>NUCLEOTIDE SEQUENCE [LARGE SCALE GENOMIC DNA] (IMGT ALLELE IGHG4*04) (ISOFORMS 1 AND 2)</scope>
</reference>
<reference key="3">
    <citation type="journal article" date="1970" name="Biochem. J.">
        <title>Human immunoglobulin subclasses. Partial amino acid sequence of the constant region of a gamma 4 chain.</title>
        <authorList>
            <person name="Pink J.R.L."/>
            <person name="Buttery S.H."/>
            <person name="de Vries G.M."/>
            <person name="Milstein C."/>
        </authorList>
    </citation>
    <scope>PROTEIN SEQUENCE OF 1-30 AND 81-326</scope>
</reference>
<reference key="4">
    <citation type="journal article" date="2001" name="EMBO J.">
        <title>EndoS, a novel secreted protein from Streptococcus pyogenes with endoglycosidase activity on human IgG.</title>
        <authorList>
            <person name="Collin M."/>
            <person name="Olsen A."/>
        </authorList>
    </citation>
    <scope>GLYCOSYLATION AT ASN-177</scope>
    <scope>DEGLYCOSYLATION (MICROBIAL INFECTION)</scope>
</reference>
<reference key="5">
    <citation type="journal article" date="2001" name="Exp. Clin. Immunogenet.">
        <title>Nomenclature of the human immunoglobulin heavy (IGH) genes.</title>
        <authorList>
            <person name="Lefranc M.P."/>
        </authorList>
    </citation>
    <scope>NOMENCLATURE</scope>
</reference>
<reference key="6">
    <citation type="book" date="2001" name="The Immunoglobulin FactsBook.">
        <title>The Immunoglobulin FactsBook.</title>
        <editorList>
            <person name="Lefranc M.P."/>
            <person name="Lefranc G."/>
        </editorList>
        <authorList>
            <person name="Lefranc M.P."/>
            <person name="Lefranc G."/>
        </authorList>
    </citation>
    <scope>NOMENCLATURE</scope>
</reference>
<reference key="7">
    <citation type="journal article" date="2007" name="Annu. Rev. Genet.">
        <title>Immunoglobulin somatic hypermutation.</title>
        <authorList>
            <person name="Teng G."/>
            <person name="Papavasiliou F.N."/>
        </authorList>
    </citation>
    <scope>REVIEW ON SOMATIC HYPERMUTATION</scope>
</reference>
<reference key="8">
    <citation type="journal article" date="2009" name="J. Proteome Res.">
        <title>Glycoproteomics analysis of human liver tissue by combination of multiple enzyme digestion and hydrazide chemistry.</title>
        <authorList>
            <person name="Chen R."/>
            <person name="Jiang X."/>
            <person name="Sun D."/>
            <person name="Han G."/>
            <person name="Wang F."/>
            <person name="Ye M."/>
            <person name="Wang L."/>
            <person name="Zou H."/>
        </authorList>
    </citation>
    <scope>GLYCOSYLATION [LARGE SCALE ANALYSIS] AT ASN-177</scope>
    <source>
        <tissue>Liver</tissue>
    </source>
</reference>
<reference key="9">
    <citation type="journal article" date="2009" name="Mol. Cell. Proteomics">
        <title>A strategy for precise and large scale identification of core fucosylated glycoproteins.</title>
        <authorList>
            <person name="Jia W."/>
            <person name="Lu Z."/>
            <person name="Fu Y."/>
            <person name="Wang H.P."/>
            <person name="Wang L.H."/>
            <person name="Chi H."/>
            <person name="Yuan Z.F."/>
            <person name="Zheng Z.B."/>
            <person name="Song L.N."/>
            <person name="Han H.H."/>
            <person name="Liang Y.M."/>
            <person name="Wang J.L."/>
            <person name="Cai Y."/>
            <person name="Zhang Y.K."/>
            <person name="Deng Y.L."/>
            <person name="Ying W.T."/>
            <person name="He S.M."/>
            <person name="Qian X.H."/>
        </authorList>
    </citation>
    <scope>GLYCOSYLATION AT ASN-177</scope>
</reference>
<reference key="10">
    <citation type="journal article" date="2010" name="Blood">
        <title>The IgG-specific endoglycosidase EndoS inhibits both cellular and complement-mediated autoimmune hemolysis.</title>
        <authorList>
            <person name="Allhorn M."/>
            <person name="Briceno J.G."/>
            <person name="Baudino L."/>
            <person name="Lood C."/>
            <person name="Olsson M.L."/>
            <person name="Izui S."/>
            <person name="Collin M."/>
        </authorList>
    </citation>
    <scope>GLYCOSYLATION AT ASN-177</scope>
    <scope>DEGLYCOSYLATION (MICROBIAL INFECTION)</scope>
</reference>
<reference key="11">
    <citation type="journal article" date="2010" name="J. Allergy Clin. Immunol.">
        <title>Structure and function of immunoglobulins.</title>
        <authorList>
            <person name="Schroeder H.W. Jr."/>
            <person name="Cavacini L."/>
        </authorList>
    </citation>
    <scope>REVIEW ON IMMUNOGLOBULINS</scope>
</reference>
<reference key="12">
    <citation type="journal article" date="2012" name="Nat. Rev. Immunol.">
        <title>Molecular programming of B cell memory.</title>
        <authorList>
            <person name="McHeyzer-Williams M."/>
            <person name="Okitsu S."/>
            <person name="Wang N."/>
            <person name="McHeyzer-Williams L."/>
        </authorList>
    </citation>
    <scope>REVIEW ON FUNCTION</scope>
</reference>
<reference key="13">
    <citation type="journal article" date="2013" name="Biochem. J.">
        <title>EndoS2 is a unique and conserved enzyme of serotype M49 group A Streptococcus that hydrolyses N-linked glycans on IgG and alpha1-acid glycoprotein.</title>
        <authorList>
            <person name="Sjoegren J."/>
            <person name="Struwe W.B."/>
            <person name="Cosgrave E.F."/>
            <person name="Rudd P.M."/>
            <person name="Stervander M."/>
            <person name="Allhorn M."/>
            <person name="Hollands A."/>
            <person name="Nizet V."/>
            <person name="Collin M."/>
        </authorList>
    </citation>
    <scope>DEGLYCOSYLATION (MICROBIAL INFECTION)</scope>
</reference>
<reference key="14">
    <citation type="journal article" date="2014" name="J. Proteomics">
        <title>An enzyme assisted RP-RPLC approach for in-depth analysis of human liver phosphoproteome.</title>
        <authorList>
            <person name="Bian Y."/>
            <person name="Song C."/>
            <person name="Cheng K."/>
            <person name="Dong M."/>
            <person name="Wang F."/>
            <person name="Huang J."/>
            <person name="Sun D."/>
            <person name="Wang L."/>
            <person name="Ye M."/>
            <person name="Zou H."/>
        </authorList>
    </citation>
    <scope>IDENTIFICATION BY MASS SPECTROMETRY [LARGE SCALE ANALYSIS]</scope>
    <source>
        <tissue>Liver</tissue>
    </source>
</reference>
<feature type="chain" id="PRO_0000153581" description="Immunoglobulin heavy constant gamma 4">
    <location>
        <begin position="1" status="less than"/>
        <end position="396"/>
    </location>
</feature>
<feature type="topological domain" description="Extracellular" evidence="13">
    <location>
        <begin position="1"/>
        <end position="347"/>
    </location>
</feature>
<feature type="transmembrane region" description="Helical" evidence="1">
    <location>
        <begin position="348"/>
        <end position="368"/>
    </location>
</feature>
<feature type="topological domain" description="Cytoplasmic" evidence="13">
    <location>
        <begin position="369"/>
        <end position="396"/>
    </location>
</feature>
<feature type="domain" description="Ig-like 1" evidence="2">
    <location>
        <begin position="6"/>
        <end position="99"/>
    </location>
</feature>
<feature type="domain" description="Ig-like 2" evidence="2">
    <location>
        <begin position="118"/>
        <end position="217"/>
    </location>
</feature>
<feature type="domain" description="Ig-like 3" evidence="2">
    <location>
        <begin position="226"/>
        <end position="322"/>
    </location>
</feature>
<feature type="region of interest" description="CH1">
    <location>
        <begin position="1"/>
        <end position="98"/>
    </location>
</feature>
<feature type="region of interest" description="Hinge">
    <location>
        <begin position="99"/>
        <end position="110"/>
    </location>
</feature>
<feature type="region of interest" description="CH2">
    <location>
        <begin position="111"/>
        <end position="220"/>
    </location>
</feature>
<feature type="region of interest" description="CH3">
    <location>
        <begin position="221"/>
        <end position="327"/>
    </location>
</feature>
<feature type="glycosylation site" description="N-linked (GlcNAc...) (complex) asparagine" evidence="3 4 5 6">
    <location>
        <position position="177"/>
    </location>
</feature>
<feature type="disulfide bond" description="Interchain (with a light chain)">
    <location>
        <position position="14"/>
    </location>
</feature>
<feature type="disulfide bond" evidence="2">
    <location>
        <begin position="27"/>
        <end position="83"/>
    </location>
</feature>
<feature type="disulfide bond" description="Interchain (with a heavy chain)">
    <location>
        <position position="106"/>
    </location>
</feature>
<feature type="disulfide bond" description="Interchain (with a heavy chain)">
    <location>
        <position position="109"/>
    </location>
</feature>
<feature type="disulfide bond" evidence="2">
    <location>
        <begin position="141"/>
        <end position="201"/>
    </location>
</feature>
<feature type="disulfide bond" evidence="2">
    <location>
        <begin position="247"/>
        <end position="305"/>
    </location>
</feature>
<feature type="splice variant" id="VSP_061824" description="In isoform 1.">
    <original>EL</original>
    <variation>GK</variation>
    <location>
        <begin position="326"/>
        <end position="327"/>
    </location>
</feature>
<feature type="splice variant" id="VSP_061825" description="In isoform 1.">
    <location>
        <begin position="328"/>
        <end position="396"/>
    </location>
</feature>
<feature type="non-terminal residue">
    <location>
        <position position="1"/>
    </location>
</feature>
<feature type="strand" evidence="14">
    <location>
        <begin position="7"/>
        <end position="11"/>
    </location>
</feature>
<feature type="strand" evidence="14">
    <location>
        <begin position="14"/>
        <end position="16"/>
    </location>
</feature>
<feature type="strand" evidence="14">
    <location>
        <begin position="18"/>
        <end position="21"/>
    </location>
</feature>
<feature type="strand" evidence="14">
    <location>
        <begin position="23"/>
        <end position="35"/>
    </location>
</feature>
<feature type="strand" evidence="14">
    <location>
        <begin position="38"/>
        <end position="41"/>
    </location>
</feature>
<feature type="helix" evidence="14">
    <location>
        <begin position="42"/>
        <end position="44"/>
    </location>
</feature>
<feature type="strand" evidence="14">
    <location>
        <begin position="50"/>
        <end position="52"/>
    </location>
</feature>
<feature type="strand" evidence="14">
    <location>
        <begin position="63"/>
        <end position="71"/>
    </location>
</feature>
<feature type="helix" evidence="14">
    <location>
        <begin position="73"/>
        <end position="75"/>
    </location>
</feature>
<feature type="strand" evidence="14">
    <location>
        <begin position="81"/>
        <end position="87"/>
    </location>
</feature>
<feature type="helix" evidence="14">
    <location>
        <begin position="88"/>
        <end position="90"/>
    </location>
</feature>
<feature type="strand" evidence="14">
    <location>
        <begin position="92"/>
        <end position="98"/>
    </location>
</feature>
<feature type="strand" evidence="19">
    <location>
        <begin position="119"/>
        <end position="123"/>
    </location>
</feature>
<feature type="helix" evidence="19">
    <location>
        <begin position="127"/>
        <end position="131"/>
    </location>
</feature>
<feature type="strand" evidence="19">
    <location>
        <begin position="138"/>
        <end position="146"/>
    </location>
</feature>
<feature type="strand" evidence="17">
    <location>
        <begin position="148"/>
        <end position="150"/>
    </location>
</feature>
<feature type="strand" evidence="19">
    <location>
        <begin position="153"/>
        <end position="159"/>
    </location>
</feature>
<feature type="strand" evidence="19">
    <location>
        <begin position="162"/>
        <end position="164"/>
    </location>
</feature>
<feature type="strand" evidence="18">
    <location>
        <begin position="167"/>
        <end position="169"/>
    </location>
</feature>
<feature type="strand" evidence="16">
    <location>
        <begin position="173"/>
        <end position="175"/>
    </location>
</feature>
<feature type="turn" evidence="16">
    <location>
        <begin position="176"/>
        <end position="178"/>
    </location>
</feature>
<feature type="strand" evidence="19">
    <location>
        <begin position="180"/>
        <end position="187"/>
    </location>
</feature>
<feature type="helix" evidence="19">
    <location>
        <begin position="190"/>
        <end position="194"/>
    </location>
</feature>
<feature type="strand" evidence="19">
    <location>
        <begin position="199"/>
        <end position="205"/>
    </location>
</feature>
<feature type="strand" evidence="20">
    <location>
        <begin position="208"/>
        <end position="210"/>
    </location>
</feature>
<feature type="strand" evidence="19">
    <location>
        <begin position="212"/>
        <end position="216"/>
    </location>
</feature>
<feature type="strand" evidence="15">
    <location>
        <begin position="227"/>
        <end position="231"/>
    </location>
</feature>
<feature type="helix" evidence="15">
    <location>
        <begin position="235"/>
        <end position="239"/>
    </location>
</feature>
<feature type="strand" evidence="15">
    <location>
        <begin position="240"/>
        <end position="255"/>
    </location>
</feature>
<feature type="strand" evidence="15">
    <location>
        <begin position="258"/>
        <end position="263"/>
    </location>
</feature>
<feature type="strand" evidence="17">
    <location>
        <begin position="266"/>
        <end position="268"/>
    </location>
</feature>
<feature type="strand" evidence="15">
    <location>
        <begin position="271"/>
        <end position="273"/>
    </location>
</feature>
<feature type="strand" evidence="15">
    <location>
        <begin position="284"/>
        <end position="293"/>
    </location>
</feature>
<feature type="helix" evidence="15">
    <location>
        <begin position="294"/>
        <end position="298"/>
    </location>
</feature>
<feature type="strand" evidence="15">
    <location>
        <begin position="303"/>
        <end position="308"/>
    </location>
</feature>
<feature type="helix" evidence="15">
    <location>
        <begin position="313"/>
        <end position="315"/>
    </location>
</feature>
<feature type="strand" evidence="15">
    <location>
        <begin position="316"/>
        <end position="321"/>
    </location>
</feature>
<comment type="function">
    <text evidence="9 10 11">Constant region of immunoglobulin heavy chains. Immunoglobulins, also known as antibodies, are membrane-bound or secreted glycoproteins produced by B lymphocytes. In the recognition phase of humoral immunity, the membrane-bound immunoglobulins serve as receptors which, upon binding of a specific antigen, trigger the clonal expansion and differentiation of B lymphocytes into immunoglobulins-secreting plasma cells. Secreted immunoglobulins mediate the effector phase of humoral immunity, which results in the elimination of bound antigens (PubMed:20176268, PubMed:22158414). The antigen binding site is formed by the variable domain of one heavy chain, together with that of its associated light chain. Thus, each immunoglobulin has two antigen binding sites with remarkable affinity for a particular antigen. The variable domains are assembled by a process called V-(D)-J rearrangement and can then be subjected to somatic hypermutations which, after exposure to antigen and selection, allow affinity maturation for a particular antigen (PubMed:17576170, PubMed:20176268).</text>
</comment>
<comment type="subunit">
    <text evidence="10">Immunoglobulins are composed of two identical heavy chains and two identical light chains; disulfide-linked.</text>
</comment>
<comment type="subcellular location">
    <molecule>Isoform 1</molecule>
    <subcellularLocation>
        <location evidence="10 11">Secreted</location>
    </subcellularLocation>
</comment>
<comment type="subcellular location">
    <molecule>Isoform 2</molecule>
    <subcellularLocation>
        <location evidence="10 11">Cell membrane</location>
        <topology evidence="1">Single-pass membrane protein</topology>
    </subcellularLocation>
</comment>
<comment type="alternative products">
    <event type="alternative splicing"/>
    <isoform>
        <id>P01861-2</id>
        <name>2</name>
        <name>Membrane-bound</name>
        <name>mIgG4</name>
        <sequence type="displayed"/>
    </isoform>
    <isoform>
        <id>P01861-1</id>
        <name>1</name>
        <name>Secreted</name>
        <name>sIgG4</name>
        <sequence type="described" ref="VSP_061824 VSP_061825"/>
    </isoform>
</comment>
<comment type="PTM">
    <text evidence="6">Glycosylation on Asn-177 is required for interaction with Fc receptors and ability to activate the complement pathway.</text>
</comment>
<comment type="PTM">
    <text evidence="3 6 7">(Microbial infection) Deglycosylation on Asn-177 by S.pyogenes EndoS or Endos2 endoglucosidases prevents interaction between immunoglobulin-gamma (IgG) and Fc receptors, impairing ability to activate the complement pathway.</text>
</comment>
<comment type="polymorphism">
    <text evidence="13">There are several alleles. The sequence shown is that of IMGT allele IGHG4*04.</text>
</comment>
<comment type="caution">
    <text evidence="13">For an example of a full-length immunoglobulin gamma heavy chain see AC P0DOX5.</text>
</comment>
<comment type="sequence caution" evidence="13">
    <conflict type="erroneous initiation">
        <sequence resource="EMBL-CDS" id="AAB59394"/>
    </conflict>
    <text>Extended N-terminus.</text>
</comment>
<proteinExistence type="evidence at protein level"/>